<dbReference type="EMBL" id="AJ291608">
    <property type="protein sequence ID" value="CAC14797.1"/>
    <property type="molecule type" value="mRNA"/>
</dbReference>
<dbReference type="EMBL" id="AL928663">
    <property type="status" value="NOT_ANNOTATED_CDS"/>
    <property type="molecule type" value="Genomic_DNA"/>
</dbReference>
<dbReference type="EMBL" id="AL928689">
    <property type="status" value="NOT_ANNOTATED_CDS"/>
    <property type="molecule type" value="Genomic_DNA"/>
</dbReference>
<dbReference type="EMBL" id="AL929246">
    <property type="status" value="NOT_ANNOTATED_CDS"/>
    <property type="molecule type" value="Genomic_DNA"/>
</dbReference>
<dbReference type="CCDS" id="CCDS38128.1"/>
<dbReference type="RefSeq" id="NP_573470.2">
    <property type="nucleotide sequence ID" value="NM_133207.2"/>
</dbReference>
<dbReference type="SMR" id="Q9ER47"/>
<dbReference type="BioGRID" id="228405">
    <property type="interactions" value="3"/>
</dbReference>
<dbReference type="FunCoup" id="Q9ER47">
    <property type="interactions" value="125"/>
</dbReference>
<dbReference type="STRING" id="10090.ENSMUSP00000074563"/>
<dbReference type="GlyCosmos" id="Q9ER47">
    <property type="glycosylation" value="1 site, No reported glycans"/>
</dbReference>
<dbReference type="GlyGen" id="Q9ER47">
    <property type="glycosylation" value="1 site, 1 N-linked glycan (1 site)"/>
</dbReference>
<dbReference type="iPTMnet" id="Q9ER47"/>
<dbReference type="PhosphoSitePlus" id="Q9ER47"/>
<dbReference type="jPOST" id="Q9ER47"/>
<dbReference type="PaxDb" id="10090-ENSMUSP00000074563"/>
<dbReference type="ProteomicsDB" id="301773"/>
<dbReference type="ABCD" id="Q9ER47">
    <property type="antibodies" value="2 sequenced antibodies"/>
</dbReference>
<dbReference type="Antibodypedia" id="19119">
    <property type="antibodies" value="170 antibodies from 25 providers"/>
</dbReference>
<dbReference type="DNASU" id="170738"/>
<dbReference type="Ensembl" id="ENSMUST00000075052.10">
    <property type="protein sequence ID" value="ENSMUSP00000074563.4"/>
    <property type="gene ID" value="ENSMUSG00000059742.11"/>
</dbReference>
<dbReference type="GeneID" id="170738"/>
<dbReference type="KEGG" id="mmu:170738"/>
<dbReference type="UCSC" id="uc008jvq.1">
    <property type="organism name" value="mouse"/>
</dbReference>
<dbReference type="AGR" id="MGI:2159566"/>
<dbReference type="CTD" id="90134"/>
<dbReference type="MGI" id="MGI:2159566">
    <property type="gene designation" value="Kcnh7"/>
</dbReference>
<dbReference type="VEuPathDB" id="HostDB:ENSMUSG00000059742"/>
<dbReference type="eggNOG" id="KOG0498">
    <property type="taxonomic scope" value="Eukaryota"/>
</dbReference>
<dbReference type="GeneTree" id="ENSGT00940000155518"/>
<dbReference type="HOGENOM" id="CLU_005746_2_0_1"/>
<dbReference type="InParanoid" id="Q9ER47"/>
<dbReference type="OMA" id="MRTSHPV"/>
<dbReference type="OrthoDB" id="432483at2759"/>
<dbReference type="PhylomeDB" id="Q9ER47"/>
<dbReference type="TreeFam" id="TF313130"/>
<dbReference type="Reactome" id="R-MMU-1296072">
    <property type="pathway name" value="Voltage gated Potassium channels"/>
</dbReference>
<dbReference type="BioGRID-ORCS" id="170738">
    <property type="hits" value="1 hit in 78 CRISPR screens"/>
</dbReference>
<dbReference type="ChiTaRS" id="Kcnh7">
    <property type="organism name" value="mouse"/>
</dbReference>
<dbReference type="PRO" id="PR:Q9ER47"/>
<dbReference type="Proteomes" id="UP000000589">
    <property type="component" value="Chromosome 2"/>
</dbReference>
<dbReference type="RNAct" id="Q9ER47">
    <property type="molecule type" value="protein"/>
</dbReference>
<dbReference type="Bgee" id="ENSMUSG00000059742">
    <property type="expression patterns" value="Expressed in primary visual cortex and 54 other cell types or tissues"/>
</dbReference>
<dbReference type="ExpressionAtlas" id="Q9ER47">
    <property type="expression patterns" value="baseline and differential"/>
</dbReference>
<dbReference type="GO" id="GO:0034702">
    <property type="term" value="C:monoatomic ion channel complex"/>
    <property type="evidence" value="ECO:0007669"/>
    <property type="project" value="UniProtKB-KW"/>
</dbReference>
<dbReference type="GO" id="GO:0005886">
    <property type="term" value="C:plasma membrane"/>
    <property type="evidence" value="ECO:0007669"/>
    <property type="project" value="UniProtKB-SubCell"/>
</dbReference>
<dbReference type="GO" id="GO:0020037">
    <property type="term" value="F:heme binding"/>
    <property type="evidence" value="ECO:0007669"/>
    <property type="project" value="Ensembl"/>
</dbReference>
<dbReference type="GO" id="GO:0005242">
    <property type="term" value="F:inward rectifier potassium channel activity"/>
    <property type="evidence" value="ECO:0007669"/>
    <property type="project" value="Ensembl"/>
</dbReference>
<dbReference type="CDD" id="cd00038">
    <property type="entry name" value="CAP_ED"/>
    <property type="match status" value="1"/>
</dbReference>
<dbReference type="CDD" id="cd00130">
    <property type="entry name" value="PAS"/>
    <property type="match status" value="1"/>
</dbReference>
<dbReference type="FunFam" id="1.10.287.70:FF:000020">
    <property type="entry name" value="Potassium channel, voltage-gated eag-related subfamily H, member 7"/>
    <property type="match status" value="1"/>
</dbReference>
<dbReference type="FunFam" id="2.60.120.10:FF:000011">
    <property type="entry name" value="Potassium channel, voltage-gated eag-related subfamily H, member 7"/>
    <property type="match status" value="1"/>
</dbReference>
<dbReference type="FunFam" id="1.10.1200.260:FF:000001">
    <property type="entry name" value="Potassium voltage-gated channel subfamily H member 7"/>
    <property type="match status" value="1"/>
</dbReference>
<dbReference type="FunFam" id="3.30.450.20:FF:000001">
    <property type="entry name" value="Potassium voltage-gated channel subfamily H member 7"/>
    <property type="match status" value="1"/>
</dbReference>
<dbReference type="Gene3D" id="1.10.1200.260">
    <property type="match status" value="1"/>
</dbReference>
<dbReference type="Gene3D" id="1.10.287.70">
    <property type="match status" value="1"/>
</dbReference>
<dbReference type="Gene3D" id="2.60.120.10">
    <property type="entry name" value="Jelly Rolls"/>
    <property type="match status" value="1"/>
</dbReference>
<dbReference type="Gene3D" id="3.30.450.20">
    <property type="entry name" value="PAS domain"/>
    <property type="match status" value="1"/>
</dbReference>
<dbReference type="InterPro" id="IPR000595">
    <property type="entry name" value="cNMP-bd_dom"/>
</dbReference>
<dbReference type="InterPro" id="IPR018490">
    <property type="entry name" value="cNMP-bd_dom_sf"/>
</dbReference>
<dbReference type="InterPro" id="IPR005821">
    <property type="entry name" value="Ion_trans_dom"/>
</dbReference>
<dbReference type="InterPro" id="IPR003938">
    <property type="entry name" value="K_chnl_volt-dep_EAG/ELK/ERG"/>
</dbReference>
<dbReference type="InterPro" id="IPR003967">
    <property type="entry name" value="K_chnl_volt-dep_ERG"/>
</dbReference>
<dbReference type="InterPro" id="IPR050818">
    <property type="entry name" value="KCNH_animal-type"/>
</dbReference>
<dbReference type="InterPro" id="IPR000014">
    <property type="entry name" value="PAS"/>
</dbReference>
<dbReference type="InterPro" id="IPR035965">
    <property type="entry name" value="PAS-like_dom_sf"/>
</dbReference>
<dbReference type="InterPro" id="IPR014710">
    <property type="entry name" value="RmlC-like_jellyroll"/>
</dbReference>
<dbReference type="NCBIfam" id="TIGR00229">
    <property type="entry name" value="sensory_box"/>
    <property type="match status" value="1"/>
</dbReference>
<dbReference type="PANTHER" id="PTHR10217:SF466">
    <property type="entry name" value="POTASSIUM VOLTAGE-GATED CHANNEL SUBFAMILY H MEMBER 7"/>
    <property type="match status" value="1"/>
</dbReference>
<dbReference type="PANTHER" id="PTHR10217">
    <property type="entry name" value="VOLTAGE AND LIGAND GATED POTASSIUM CHANNEL"/>
    <property type="match status" value="1"/>
</dbReference>
<dbReference type="Pfam" id="PF00027">
    <property type="entry name" value="cNMP_binding"/>
    <property type="match status" value="1"/>
</dbReference>
<dbReference type="Pfam" id="PF00520">
    <property type="entry name" value="Ion_trans"/>
    <property type="match status" value="1"/>
</dbReference>
<dbReference type="Pfam" id="PF13426">
    <property type="entry name" value="PAS_9"/>
    <property type="match status" value="1"/>
</dbReference>
<dbReference type="PRINTS" id="PR01463">
    <property type="entry name" value="EAGCHANLFMLY"/>
</dbReference>
<dbReference type="PRINTS" id="PR01470">
    <property type="entry name" value="ERGCHANNEL"/>
</dbReference>
<dbReference type="SMART" id="SM00100">
    <property type="entry name" value="cNMP"/>
    <property type="match status" value="1"/>
</dbReference>
<dbReference type="SUPFAM" id="SSF51206">
    <property type="entry name" value="cAMP-binding domain-like"/>
    <property type="match status" value="1"/>
</dbReference>
<dbReference type="SUPFAM" id="SSF55785">
    <property type="entry name" value="PYP-like sensor domain (PAS domain)"/>
    <property type="match status" value="1"/>
</dbReference>
<dbReference type="SUPFAM" id="SSF81324">
    <property type="entry name" value="Voltage-gated potassium channels"/>
    <property type="match status" value="1"/>
</dbReference>
<dbReference type="PROSITE" id="PS50042">
    <property type="entry name" value="CNMP_BINDING_3"/>
    <property type="match status" value="1"/>
</dbReference>
<dbReference type="PROSITE" id="PS50112">
    <property type="entry name" value="PAS"/>
    <property type="match status" value="1"/>
</dbReference>
<protein>
    <recommendedName>
        <fullName evidence="7">Voltage-gated inwardly rectifying potassium channel KCNH7</fullName>
    </recommendedName>
    <alternativeName>
        <fullName>Ether-a-go-go-related gene potassium channel 3</fullName>
        <shortName>ERG-3</shortName>
        <shortName>Eag-related protein 3</shortName>
        <shortName>Ether-a-go-go-related protein 3</shortName>
    </alternativeName>
    <alternativeName>
        <fullName>Potassium voltage-gated channel subfamily H member 7</fullName>
    </alternativeName>
    <alternativeName>
        <fullName>Voltage-gated potassium channel subunit Kv11.3</fullName>
    </alternativeName>
</protein>
<feature type="chain" id="PRO_0000054016" description="Voltage-gated inwardly rectifying potassium channel KCNH7">
    <location>
        <begin position="1"/>
        <end position="1195"/>
    </location>
</feature>
<feature type="topological domain" description="Cytoplasmic" evidence="4">
    <location>
        <begin position="1"/>
        <end position="412"/>
    </location>
</feature>
<feature type="transmembrane region" description="Helical; Name=Segment S1" evidence="4">
    <location>
        <begin position="413"/>
        <end position="433"/>
    </location>
</feature>
<feature type="topological domain" description="Extracellular" evidence="4">
    <location>
        <begin position="434"/>
        <end position="449"/>
    </location>
</feature>
<feature type="transmembrane region" description="Helical; Name=Segment S2" evidence="4">
    <location>
        <begin position="450"/>
        <end position="470"/>
    </location>
</feature>
<feature type="topological domain" description="Cytoplasmic" evidence="4">
    <location>
        <begin position="471"/>
        <end position="494"/>
    </location>
</feature>
<feature type="transmembrane region" description="Helical; Name=Segment S3" evidence="4">
    <location>
        <begin position="495"/>
        <end position="515"/>
    </location>
</feature>
<feature type="topological domain" description="Extracellular" evidence="4">
    <location>
        <begin position="516"/>
        <end position="521"/>
    </location>
</feature>
<feature type="transmembrane region" description="Helical; Voltage-sensor; Name=Segment S4" evidence="4">
    <location>
        <begin position="522"/>
        <end position="542"/>
    </location>
</feature>
<feature type="topological domain" description="Cytoplasmic" evidence="4">
    <location>
        <begin position="543"/>
        <end position="549"/>
    </location>
</feature>
<feature type="transmembrane region" description="Helical; Name=Segment S5" evidence="4">
    <location>
        <begin position="550"/>
        <end position="570"/>
    </location>
</feature>
<feature type="topological domain" description="Extracellular" evidence="4">
    <location>
        <begin position="571"/>
        <end position="614"/>
    </location>
</feature>
<feature type="intramembrane region" description="Pore-forming; Name=Segment H5" evidence="4">
    <location>
        <begin position="615"/>
        <end position="635"/>
    </location>
</feature>
<feature type="topological domain" description="Extracellular" evidence="4">
    <location>
        <begin position="636"/>
        <end position="641"/>
    </location>
</feature>
<feature type="transmembrane region" description="Helical; Name=Segment S6" evidence="4">
    <location>
        <begin position="642"/>
        <end position="662"/>
    </location>
</feature>
<feature type="topological domain" description="Cytoplasmic" evidence="4">
    <location>
        <begin position="663"/>
        <end position="1195"/>
    </location>
</feature>
<feature type="domain" description="PAS">
    <location>
        <begin position="41"/>
        <end position="70"/>
    </location>
</feature>
<feature type="domain" description="PAC">
    <location>
        <begin position="92"/>
        <end position="144"/>
    </location>
</feature>
<feature type="region of interest" description="Disordered" evidence="6">
    <location>
        <begin position="194"/>
        <end position="216"/>
    </location>
</feature>
<feature type="region of interest" description="cNMP-binding domain" evidence="5">
    <location>
        <begin position="745"/>
        <end position="845"/>
    </location>
</feature>
<feature type="region of interest" description="Disordered" evidence="6">
    <location>
        <begin position="870"/>
        <end position="915"/>
    </location>
</feature>
<feature type="coiled-coil region" evidence="4">
    <location>
        <begin position="1027"/>
        <end position="1054"/>
    </location>
</feature>
<feature type="short sequence motif" description="Selectivity filter" evidence="3">
    <location>
        <begin position="627"/>
        <end position="632"/>
    </location>
</feature>
<feature type="compositionally biased region" description="Basic and acidic residues" evidence="6">
    <location>
        <begin position="890"/>
        <end position="902"/>
    </location>
</feature>
<feature type="modified residue" description="Phosphoserine" evidence="9">
    <location>
        <position position="174"/>
    </location>
</feature>
<feature type="modified residue" description="Phosphoserine" evidence="9">
    <location>
        <position position="238"/>
    </location>
</feature>
<feature type="modified residue" description="Phosphoserine" evidence="1">
    <location>
        <position position="319"/>
    </location>
</feature>
<feature type="modified residue" description="Phosphoserine" evidence="1">
    <location>
        <position position="891"/>
    </location>
</feature>
<feature type="modified residue" description="Phosphoserine" evidence="1">
    <location>
        <position position="894"/>
    </location>
</feature>
<feature type="glycosylation site" description="N-linked (GlcNAc...) asparagine" evidence="4">
    <location>
        <position position="600"/>
    </location>
</feature>
<feature type="sequence conflict" description="In Ref. 1; CAC14797." evidence="7" ref="1">
    <original>F</original>
    <variation>L</variation>
    <location>
        <position position="48"/>
    </location>
</feature>
<feature type="sequence conflict" description="In Ref. 1; CAC14797." evidence="7" ref="1">
    <original>I</original>
    <variation>V</variation>
    <location>
        <position position="511"/>
    </location>
</feature>
<feature type="sequence conflict" description="In Ref. 1; CAC14797." evidence="7" ref="1">
    <original>S</original>
    <variation>N</variation>
    <location>
        <position position="750"/>
    </location>
</feature>
<feature type="sequence conflict" description="In Ref. 1; CAC14797." evidence="7" ref="1">
    <original>HSG</original>
    <variation>PSP</variation>
    <location>
        <begin position="972"/>
        <end position="974"/>
    </location>
</feature>
<feature type="sequence conflict" description="In Ref. 1; CAC14797." evidence="7" ref="1">
    <original>E</original>
    <variation>D</variation>
    <location>
        <position position="979"/>
    </location>
</feature>
<evidence type="ECO:0000250" key="1">
    <source>
        <dbReference type="UniProtKB" id="O54852"/>
    </source>
</evidence>
<evidence type="ECO:0000250" key="2">
    <source>
        <dbReference type="UniProtKB" id="Q12809"/>
    </source>
</evidence>
<evidence type="ECO:0000250" key="3">
    <source>
        <dbReference type="UniProtKB" id="Q63472"/>
    </source>
</evidence>
<evidence type="ECO:0000255" key="4"/>
<evidence type="ECO:0000255" key="5">
    <source>
        <dbReference type="PROSITE-ProRule" id="PRU00060"/>
    </source>
</evidence>
<evidence type="ECO:0000256" key="6">
    <source>
        <dbReference type="SAM" id="MobiDB-lite"/>
    </source>
</evidence>
<evidence type="ECO:0000305" key="7"/>
<evidence type="ECO:0000312" key="8">
    <source>
        <dbReference type="MGI" id="MGI:2159566"/>
    </source>
</evidence>
<evidence type="ECO:0007744" key="9">
    <source>
    </source>
</evidence>
<sequence length="1195" mass="135062">MPVRRGHVAPQNTFLGTIIRKFEGQNKKFIIANARVQNCAIIYCNDGFCEMTGFSRPDVMQKPCTCDFLHGPETKRHDIAQIAQALLGSEERKVEVTYYHKNGSTFICNTHIIPVKNQEGVAMMFIINFEYVTDEENAATPERVNPILPVKTVNRKLFGFKFPGLRVLTYRKQSLPQEDPDVVVIDSSKHSDDSVAMKHFKSPTKESCSPSEADDTKALIQPSQCSPLVNISGPLDHSSPKRQWDRLYPDMLQSSSQLTHSRSRESLCSIRRASSVHDIEGFSVHPKNIFRDRHASEDNGRNVKGPFNHIKSSLLGSTSDSNLNKYSTINKIPQLTLNFSDVKTEKKNTSPPSSDKTIIAPKVKERTHNVTEKVTQVLSLGADVLPEYKLQTPRINKFTILHYSPFKAVWDWLILLLVIYTAIFTPYSAAFLLNDREEQKRRECGYSCSPLNVVDLIVDIMFIIDILINFRTTYVNQNEEVVSDPAKIAIHYFKGWFLIDMVAAIPFDLLIFGSGSDETTTLIGLLKTARLLRLVRVARKLDRYSEYGAAVLMLLMCIFALIAHWLACIWYAIGNVERPYLTDKIGWLDSLGTQIGKRYNDSDSSSGPSIKDKYVTALYFTFSSLTSVGFGNVSPNTNSEKIFSICVMLIGSLMYASIFGNVSAIIQRLYSGTARYHMQMLRVKEFIRFHQIPNPLRQRLEEYFQHAWTYTNGIDMNMVLKGFPECLQADICLHLNQTLLQNCKAFRGASKGCLRALAMKFKTTHAPPGDTLVHCGDVLTALYFLSRGSIEILKDDIVVAILGKNDIFGEMVHLYAKPGKSNADVRALTYCDLHKIQREDLLEVLDMYPEFSDHFLTNLELTFNLRHESAKSQSVNDSEGDTGKLRRRRLSFESEGEKDFSKENSANDADDSTDTIRRYQSSKKHFEERKSRSSSFISSIDDEQKPLFLGTVDSTPRMVKATRLHGEETMPHSGRIHTEKRSHSCRDITDTHSWEREPARAQPEECSPSGLQRAAWGVSETESDLTYGEVEQRLDLLQEQLNRLESQMTTDIQAILQLLQKQTTVVPPAYSMVTAGAEYQRPILRLLRTSHPRASIKTDRSFSPSSQCPEFLDLEKSKLQSKESLSSGRRLNTASEDNLTSLLKQDSDASSELDPRQRKTYLHPIRHPSLPDSSLSTVGILGLHRHVSDPGLPGK</sequence>
<accession>Q9ER47</accession>
<accession>A2AUY8</accession>
<gene>
    <name evidence="8" type="primary">Kcnh7</name>
    <name type="synonym">Erg3</name>
</gene>
<keyword id="KW-1003">Cell membrane</keyword>
<keyword id="KW-0175">Coiled coil</keyword>
<keyword id="KW-0325">Glycoprotein</keyword>
<keyword id="KW-0407">Ion channel</keyword>
<keyword id="KW-0406">Ion transport</keyword>
<keyword id="KW-0472">Membrane</keyword>
<keyword id="KW-0597">Phosphoprotein</keyword>
<keyword id="KW-0630">Potassium</keyword>
<keyword id="KW-0631">Potassium channel</keyword>
<keyword id="KW-0633">Potassium transport</keyword>
<keyword id="KW-1185">Reference proteome</keyword>
<keyword id="KW-0812">Transmembrane</keyword>
<keyword id="KW-1133">Transmembrane helix</keyword>
<keyword id="KW-0813">Transport</keyword>
<keyword id="KW-0851">Voltage-gated channel</keyword>
<organism>
    <name type="scientific">Mus musculus</name>
    <name type="common">Mouse</name>
    <dbReference type="NCBI Taxonomy" id="10090"/>
    <lineage>
        <taxon>Eukaryota</taxon>
        <taxon>Metazoa</taxon>
        <taxon>Chordata</taxon>
        <taxon>Craniata</taxon>
        <taxon>Vertebrata</taxon>
        <taxon>Euteleostomi</taxon>
        <taxon>Mammalia</taxon>
        <taxon>Eutheria</taxon>
        <taxon>Euarchontoglires</taxon>
        <taxon>Glires</taxon>
        <taxon>Rodentia</taxon>
        <taxon>Myomorpha</taxon>
        <taxon>Muroidea</taxon>
        <taxon>Muridae</taxon>
        <taxon>Murinae</taxon>
        <taxon>Mus</taxon>
        <taxon>Mus</taxon>
    </lineage>
</organism>
<comment type="function">
    <text evidence="1">Pore-forming (alpha) subunit of voltage-gated inwardly rectifying potassium channel. Exhibits faster activation and deactivation kinetics and slow inactivation at membrane potentials positive to 240 mV, resulting in the weakest inward rectification.</text>
</comment>
<comment type="catalytic activity">
    <reaction evidence="1">
        <text>K(+)(in) = K(+)(out)</text>
        <dbReference type="Rhea" id="RHEA:29463"/>
        <dbReference type="ChEBI" id="CHEBI:29103"/>
    </reaction>
</comment>
<comment type="subunit">
    <text evidence="1">The potassium channel is probably composed of a homo- or heterotetrameric complex of pore-forming alpha subunits that can associate only within their subfamily.</text>
</comment>
<comment type="subcellular location">
    <subcellularLocation>
        <location evidence="2">Cell membrane</location>
        <topology evidence="2">Multi-pass membrane protein</topology>
    </subcellularLocation>
</comment>
<comment type="domain">
    <text evidence="2">The S4-S5 linker acts as a signal integrator where it both couples voltage-sensor domain (VSD) movement to pore opening and closure, as well as providing a binding site for other domains that regulate activation and/or deactivation of the channel.</text>
</comment>
<comment type="similarity">
    <text evidence="7">Belongs to the potassium channel family. H (Eag) (TC 1.A.1.20) subfamily. Kv11.3/KCNH7 sub-subfamily.</text>
</comment>
<name>KCNH7_MOUSE</name>
<proteinExistence type="evidence at protein level"/>
<reference key="1">
    <citation type="submission" date="2000-10" db="EMBL/GenBank/DDBJ databases">
        <title>Erg genes expression during development of mouse embryos.</title>
        <authorList>
            <person name="Arcangeli A."/>
        </authorList>
    </citation>
    <scope>NUCLEOTIDE SEQUENCE [MRNA]</scope>
    <source>
        <tissue>Brain</tissue>
    </source>
</reference>
<reference key="2">
    <citation type="journal article" date="2009" name="PLoS Biol.">
        <title>Lineage-specific biology revealed by a finished genome assembly of the mouse.</title>
        <authorList>
            <person name="Church D.M."/>
            <person name="Goodstadt L."/>
            <person name="Hillier L.W."/>
            <person name="Zody M.C."/>
            <person name="Goldstein S."/>
            <person name="She X."/>
            <person name="Bult C.J."/>
            <person name="Agarwala R."/>
            <person name="Cherry J.L."/>
            <person name="DiCuccio M."/>
            <person name="Hlavina W."/>
            <person name="Kapustin Y."/>
            <person name="Meric P."/>
            <person name="Maglott D."/>
            <person name="Birtle Z."/>
            <person name="Marques A.C."/>
            <person name="Graves T."/>
            <person name="Zhou S."/>
            <person name="Teague B."/>
            <person name="Potamousis K."/>
            <person name="Churas C."/>
            <person name="Place M."/>
            <person name="Herschleb J."/>
            <person name="Runnheim R."/>
            <person name="Forrest D."/>
            <person name="Amos-Landgraf J."/>
            <person name="Schwartz D.C."/>
            <person name="Cheng Z."/>
            <person name="Lindblad-Toh K."/>
            <person name="Eichler E.E."/>
            <person name="Ponting C.P."/>
        </authorList>
    </citation>
    <scope>NUCLEOTIDE SEQUENCE [LARGE SCALE GENOMIC DNA]</scope>
    <source>
        <strain>C57BL/6J</strain>
    </source>
</reference>
<reference key="3">
    <citation type="journal article" date="2010" name="Cell">
        <title>A tissue-specific atlas of mouse protein phosphorylation and expression.</title>
        <authorList>
            <person name="Huttlin E.L."/>
            <person name="Jedrychowski M.P."/>
            <person name="Elias J.E."/>
            <person name="Goswami T."/>
            <person name="Rad R."/>
            <person name="Beausoleil S.A."/>
            <person name="Villen J."/>
            <person name="Haas W."/>
            <person name="Sowa M.E."/>
            <person name="Gygi S.P."/>
        </authorList>
    </citation>
    <scope>PHOSPHORYLATION [LARGE SCALE ANALYSIS] AT SER-174 AND SER-238</scope>
    <scope>IDENTIFICATION BY MASS SPECTROMETRY [LARGE SCALE ANALYSIS]</scope>
    <source>
        <tissue>Brain</tissue>
    </source>
</reference>